<organism>
    <name type="scientific">Yarrowia lipolytica (strain CLIB 122 / E 150)</name>
    <name type="common">Yeast</name>
    <name type="synonym">Candida lipolytica</name>
    <dbReference type="NCBI Taxonomy" id="284591"/>
    <lineage>
        <taxon>Eukaryota</taxon>
        <taxon>Fungi</taxon>
        <taxon>Dikarya</taxon>
        <taxon>Ascomycota</taxon>
        <taxon>Saccharomycotina</taxon>
        <taxon>Dipodascomycetes</taxon>
        <taxon>Dipodascales</taxon>
        <taxon>Dipodascales incertae sedis</taxon>
        <taxon>Yarrowia</taxon>
    </lineage>
</organism>
<name>MED17_YARLI</name>
<gene>
    <name type="primary">SRB4</name>
    <name type="synonym">MED17</name>
    <name type="ordered locus">YALI0F28435g</name>
</gene>
<accession>Q6C022</accession>
<proteinExistence type="inferred from homology"/>
<dbReference type="EMBL" id="CR382132">
    <property type="protein sequence ID" value="CAG78802.1"/>
    <property type="molecule type" value="Genomic_DNA"/>
</dbReference>
<dbReference type="RefSeq" id="XP_505990.1">
    <property type="nucleotide sequence ID" value="XM_505990.1"/>
</dbReference>
<dbReference type="SMR" id="Q6C022"/>
<dbReference type="FunCoup" id="Q6C022">
    <property type="interactions" value="165"/>
</dbReference>
<dbReference type="STRING" id="284591.Q6C022"/>
<dbReference type="EnsemblFungi" id="CAG78802">
    <property type="protein sequence ID" value="CAG78802"/>
    <property type="gene ID" value="YALI0_F28435g"/>
</dbReference>
<dbReference type="KEGG" id="yli:2908851"/>
<dbReference type="VEuPathDB" id="FungiDB:YALI0_F28435g"/>
<dbReference type="HOGENOM" id="CLU_015164_1_0_1"/>
<dbReference type="InParanoid" id="Q6C022"/>
<dbReference type="OMA" id="FHNIRIN"/>
<dbReference type="OrthoDB" id="120803at4891"/>
<dbReference type="Proteomes" id="UP000001300">
    <property type="component" value="Chromosome F"/>
</dbReference>
<dbReference type="GO" id="GO:0070847">
    <property type="term" value="C:core mediator complex"/>
    <property type="evidence" value="ECO:0000318"/>
    <property type="project" value="GO_Central"/>
</dbReference>
<dbReference type="GO" id="GO:0016592">
    <property type="term" value="C:mediator complex"/>
    <property type="evidence" value="ECO:0000318"/>
    <property type="project" value="GO_Central"/>
</dbReference>
<dbReference type="GO" id="GO:0003712">
    <property type="term" value="F:transcription coregulator activity"/>
    <property type="evidence" value="ECO:0000318"/>
    <property type="project" value="GO_Central"/>
</dbReference>
<dbReference type="GO" id="GO:0006357">
    <property type="term" value="P:regulation of transcription by RNA polymerase II"/>
    <property type="evidence" value="ECO:0000318"/>
    <property type="project" value="GO_Central"/>
</dbReference>
<dbReference type="Gene3D" id="6.10.250.2620">
    <property type="match status" value="1"/>
</dbReference>
<dbReference type="InterPro" id="IPR019313">
    <property type="entry name" value="Mediator_Med17"/>
</dbReference>
<dbReference type="PANTHER" id="PTHR13114">
    <property type="entry name" value="MEDIATOR OF RNA POLYMERASE II TRANSCRIPTION SUBUNIT 17"/>
    <property type="match status" value="1"/>
</dbReference>
<dbReference type="PANTHER" id="PTHR13114:SF7">
    <property type="entry name" value="MEDIATOR OF RNA POLYMERASE II TRANSCRIPTION SUBUNIT 17"/>
    <property type="match status" value="1"/>
</dbReference>
<dbReference type="Pfam" id="PF10156">
    <property type="entry name" value="Med17"/>
    <property type="match status" value="1"/>
</dbReference>
<reference key="1">
    <citation type="journal article" date="2004" name="Nature">
        <title>Genome evolution in yeasts.</title>
        <authorList>
            <person name="Dujon B."/>
            <person name="Sherman D."/>
            <person name="Fischer G."/>
            <person name="Durrens P."/>
            <person name="Casaregola S."/>
            <person name="Lafontaine I."/>
            <person name="de Montigny J."/>
            <person name="Marck C."/>
            <person name="Neuveglise C."/>
            <person name="Talla E."/>
            <person name="Goffard N."/>
            <person name="Frangeul L."/>
            <person name="Aigle M."/>
            <person name="Anthouard V."/>
            <person name="Babour A."/>
            <person name="Barbe V."/>
            <person name="Barnay S."/>
            <person name="Blanchin S."/>
            <person name="Beckerich J.-M."/>
            <person name="Beyne E."/>
            <person name="Bleykasten C."/>
            <person name="Boisrame A."/>
            <person name="Boyer J."/>
            <person name="Cattolico L."/>
            <person name="Confanioleri F."/>
            <person name="de Daruvar A."/>
            <person name="Despons L."/>
            <person name="Fabre E."/>
            <person name="Fairhead C."/>
            <person name="Ferry-Dumazet H."/>
            <person name="Groppi A."/>
            <person name="Hantraye F."/>
            <person name="Hennequin C."/>
            <person name="Jauniaux N."/>
            <person name="Joyet P."/>
            <person name="Kachouri R."/>
            <person name="Kerrest A."/>
            <person name="Koszul R."/>
            <person name="Lemaire M."/>
            <person name="Lesur I."/>
            <person name="Ma L."/>
            <person name="Muller H."/>
            <person name="Nicaud J.-M."/>
            <person name="Nikolski M."/>
            <person name="Oztas S."/>
            <person name="Ozier-Kalogeropoulos O."/>
            <person name="Pellenz S."/>
            <person name="Potier S."/>
            <person name="Richard G.-F."/>
            <person name="Straub M.-L."/>
            <person name="Suleau A."/>
            <person name="Swennen D."/>
            <person name="Tekaia F."/>
            <person name="Wesolowski-Louvel M."/>
            <person name="Westhof E."/>
            <person name="Wirth B."/>
            <person name="Zeniou-Meyer M."/>
            <person name="Zivanovic Y."/>
            <person name="Bolotin-Fukuhara M."/>
            <person name="Thierry A."/>
            <person name="Bouchier C."/>
            <person name="Caudron B."/>
            <person name="Scarpelli C."/>
            <person name="Gaillardin C."/>
            <person name="Weissenbach J."/>
            <person name="Wincker P."/>
            <person name="Souciet J.-L."/>
        </authorList>
    </citation>
    <scope>NUCLEOTIDE SEQUENCE [LARGE SCALE GENOMIC DNA]</scope>
    <source>
        <strain>CLIB 122 / E 150</strain>
    </source>
</reference>
<keyword id="KW-0010">Activator</keyword>
<keyword id="KW-0539">Nucleus</keyword>
<keyword id="KW-1185">Reference proteome</keyword>
<keyword id="KW-0804">Transcription</keyword>
<keyword id="KW-0805">Transcription regulation</keyword>
<feature type="chain" id="PRO_0000304720" description="Mediator of RNA polymerase II transcription subunit 17">
    <location>
        <begin position="1"/>
        <end position="511"/>
    </location>
</feature>
<sequence>MSDIKVTLAVEDRAENQDTLSISEIVPRIVAERKSFVDVTEESLLEEIANCVADSADDNVKDEVDEKPDESPFDQHRLKLLENVKAAYNESALALDFVSLLISSVRPTSASTSMSPHLKTHIPVGSLGADRVPAPQVANEPGVGIGWKIESLTNARDRLKTCASRLRTEAAKEKTYWAGVASIAATGEVLFKVRNSDTRGLGIKYGFGDAGSKYRDPGIGVLKRSATGTVDFEPKEEVQKKFVRVTIKSEEGEVTKSVSNVYTRDSKPPTDPTLAAIHETRHALFEEELFFEIAREARLLTSRKVTVADGAVTVDLGEGDMVVIEWVEVPEEPTTTFAPSLANLFVLALRLLLANAHRQQLEKMRTPPAPLQSKGGPNPNPPLPILRPLLAHILHKRLVSRARRSLYLLSTTHSGLSFEITTNNSTDKESSSLGRLMAAPVSNLKIKFSDKGNAKVVIPSPLQSHQSMFDVTMFKGTSQETVTSHTGFHELVELEEWVRWAADRSEPKKSN</sequence>
<comment type="function">
    <text evidence="1">Component of the Mediator complex, a coactivator involved in the regulated transcription of nearly all RNA polymerase II-dependent genes. Mediator functions as a bridge to convey information from gene-specific regulatory proteins to the basal RNA polymerase II transcription machinery. Mediator is recruited to promoters by direct interactions with regulatory proteins and serves as a scaffold for the assembly of a functional preinitiation complex with RNA polymerase II and the general transcription factors (By similarity).</text>
</comment>
<comment type="subunit">
    <text evidence="1">Component of the Mediator complex.</text>
</comment>
<comment type="subcellular location">
    <subcellularLocation>
        <location evidence="1">Nucleus</location>
    </subcellularLocation>
</comment>
<comment type="similarity">
    <text evidence="2">Belongs to the Mediator complex subunit 17 family.</text>
</comment>
<protein>
    <recommendedName>
        <fullName>Mediator of RNA polymerase II transcription subunit 17</fullName>
    </recommendedName>
    <alternativeName>
        <fullName>Mediator complex subunit 17</fullName>
    </alternativeName>
</protein>
<evidence type="ECO:0000250" key="1"/>
<evidence type="ECO:0000305" key="2"/>